<feature type="chain" id="PRO_0000426980" description="Cyclopropane mycolic acid synthase 1">
    <location>
        <begin position="1"/>
        <end position="287"/>
    </location>
</feature>
<feature type="active site" evidence="1">
    <location>
        <position position="269"/>
    </location>
</feature>
<feature type="binding site" evidence="1">
    <location>
        <begin position="33"/>
        <end position="34"/>
    </location>
    <ligand>
        <name>S-adenosyl-L-methionine</name>
        <dbReference type="ChEBI" id="CHEBI:59789"/>
    </ligand>
</feature>
<feature type="binding site" evidence="1">
    <location>
        <begin position="68"/>
        <end position="76"/>
    </location>
    <ligand>
        <name>S-adenosyl-L-methionine</name>
        <dbReference type="ChEBI" id="CHEBI:59789"/>
    </ligand>
</feature>
<feature type="binding site" evidence="1">
    <location>
        <begin position="94"/>
        <end position="99"/>
    </location>
    <ligand>
        <name>S-adenosyl-L-methionine</name>
        <dbReference type="ChEBI" id="CHEBI:59789"/>
    </ligand>
</feature>
<feature type="binding site" evidence="1">
    <location>
        <begin position="123"/>
        <end position="124"/>
    </location>
    <ligand>
        <name>S-adenosyl-L-methionine</name>
        <dbReference type="ChEBI" id="CHEBI:59789"/>
    </ligand>
</feature>
<keyword id="KW-0963">Cytoplasm</keyword>
<keyword id="KW-0444">Lipid biosynthesis</keyword>
<keyword id="KW-0443">Lipid metabolism</keyword>
<keyword id="KW-0489">Methyltransferase</keyword>
<keyword id="KW-1185">Reference proteome</keyword>
<keyword id="KW-0949">S-adenosyl-L-methionine</keyword>
<keyword id="KW-0808">Transferase</keyword>
<gene>
    <name type="primary">cmaA1</name>
    <name type="synonym">cma1</name>
    <name type="synonym">CMAS-1</name>
    <name type="ordered locus">MT3499</name>
</gene>
<accession>P9WPB6</accession>
<accession>L0TCE3</accession>
<accession>P0C5C2</accession>
<accession>Q11195</accession>
<protein>
    <recommendedName>
        <fullName>Cyclopropane mycolic acid synthase 1</fullName>
        <shortName>CMAS</shortName>
        <ecNumber>2.1.1.79</ecNumber>
    </recommendedName>
    <alternativeName>
        <fullName>Cyclopropane-fatty-acyl-phospholipid synthase</fullName>
        <shortName>CFA synthase</shortName>
        <shortName>Cyclopropane fatty acid synthase</shortName>
    </alternativeName>
    <alternativeName>
        <fullName>Mycolic acid methyltransferase</fullName>
        <shortName>MA-MT</shortName>
    </alternativeName>
    <alternativeName>
        <fullName>S-adenosylmethionine-dependent methyltransferase</fullName>
        <shortName>AdoMet-MT</shortName>
        <shortName>SAM-MT</shortName>
    </alternativeName>
</protein>
<evidence type="ECO:0000250" key="1"/>
<evidence type="ECO:0000305" key="2"/>
<organism>
    <name type="scientific">Mycobacterium tuberculosis (strain CDC 1551 / Oshkosh)</name>
    <dbReference type="NCBI Taxonomy" id="83331"/>
    <lineage>
        <taxon>Bacteria</taxon>
        <taxon>Bacillati</taxon>
        <taxon>Actinomycetota</taxon>
        <taxon>Actinomycetes</taxon>
        <taxon>Mycobacteriales</taxon>
        <taxon>Mycobacteriaceae</taxon>
        <taxon>Mycobacterium</taxon>
        <taxon>Mycobacterium tuberculosis complex</taxon>
    </lineage>
</organism>
<reference key="1">
    <citation type="journal article" date="2002" name="J. Bacteriol.">
        <title>Whole-genome comparison of Mycobacterium tuberculosis clinical and laboratory strains.</title>
        <authorList>
            <person name="Fleischmann R.D."/>
            <person name="Alland D."/>
            <person name="Eisen J.A."/>
            <person name="Carpenter L."/>
            <person name="White O."/>
            <person name="Peterson J.D."/>
            <person name="DeBoy R.T."/>
            <person name="Dodson R.J."/>
            <person name="Gwinn M.L."/>
            <person name="Haft D.H."/>
            <person name="Hickey E.K."/>
            <person name="Kolonay J.F."/>
            <person name="Nelson W.C."/>
            <person name="Umayam L.A."/>
            <person name="Ermolaeva M.D."/>
            <person name="Salzberg S.L."/>
            <person name="Delcher A."/>
            <person name="Utterback T.R."/>
            <person name="Weidman J.F."/>
            <person name="Khouri H.M."/>
            <person name="Gill J."/>
            <person name="Mikula A."/>
            <person name="Bishai W."/>
            <person name="Jacobs W.R. Jr."/>
            <person name="Venter J.C."/>
            <person name="Fraser C.M."/>
        </authorList>
    </citation>
    <scope>NUCLEOTIDE SEQUENCE [LARGE SCALE GENOMIC DNA]</scope>
    <source>
        <strain>CDC 1551 / Oshkosh</strain>
    </source>
</reference>
<name>CMAS1_MYCTO</name>
<sequence length="287" mass="32505">MPDELKPHFANVQAHYDLSDDFFRLFLDPTQTYSCAYFERDDMTLQEAQIAKIDLALGKLGLQPGMTLLDVGCGWGATMMRAVEKYDVNVVGLTLSKNQANHVQQLVANSENLRSKRVLLAGWEQFDEPVDRIVSIGAFEHFGHERYDAFFSLAHRLLPADGVMLLHTITGLHPKEIHERGLPMSFTFARFLKFIVTEIFPGGRLPSIPMVQECASANGFTVTRVQSLQPHYAKTLDLWSAALQANKGQDIALQSEEVYERYMKYLTGCAEMFRIGYIDVNQFTCQK</sequence>
<dbReference type="EC" id="2.1.1.79"/>
<dbReference type="EMBL" id="AE000516">
    <property type="protein sequence ID" value="AAK47836.1"/>
    <property type="molecule type" value="Genomic_DNA"/>
</dbReference>
<dbReference type="PIR" id="G70974">
    <property type="entry name" value="G70974"/>
</dbReference>
<dbReference type="RefSeq" id="WP_003917785.1">
    <property type="nucleotide sequence ID" value="NC_002755.2"/>
</dbReference>
<dbReference type="SMR" id="P9WPB6"/>
<dbReference type="DrugCentral" id="P9WPB6"/>
<dbReference type="KEGG" id="mtc:MT3499"/>
<dbReference type="PATRIC" id="fig|83331.31.peg.3756"/>
<dbReference type="HOGENOM" id="CLU_026434_3_0_11"/>
<dbReference type="UniPathway" id="UPA00915"/>
<dbReference type="Proteomes" id="UP000001020">
    <property type="component" value="Chromosome"/>
</dbReference>
<dbReference type="GO" id="GO:0005737">
    <property type="term" value="C:cytoplasm"/>
    <property type="evidence" value="ECO:0007669"/>
    <property type="project" value="UniProtKB-SubCell"/>
</dbReference>
<dbReference type="GO" id="GO:0008825">
    <property type="term" value="F:cyclopropane-fatty-acyl-phospholipid synthase activity"/>
    <property type="evidence" value="ECO:0007669"/>
    <property type="project" value="UniProtKB-EC"/>
</dbReference>
<dbReference type="GO" id="GO:0008610">
    <property type="term" value="P:lipid biosynthetic process"/>
    <property type="evidence" value="ECO:0007669"/>
    <property type="project" value="InterPro"/>
</dbReference>
<dbReference type="GO" id="GO:0032259">
    <property type="term" value="P:methylation"/>
    <property type="evidence" value="ECO:0007669"/>
    <property type="project" value="UniProtKB-KW"/>
</dbReference>
<dbReference type="CDD" id="cd02440">
    <property type="entry name" value="AdoMet_MTases"/>
    <property type="match status" value="1"/>
</dbReference>
<dbReference type="FunFam" id="3.40.50.150:FF:000115">
    <property type="entry name" value="Cyclopropane mycolic acid synthase 1"/>
    <property type="match status" value="1"/>
</dbReference>
<dbReference type="Gene3D" id="3.40.50.150">
    <property type="entry name" value="Vaccinia Virus protein VP39"/>
    <property type="match status" value="1"/>
</dbReference>
<dbReference type="InterPro" id="IPR050723">
    <property type="entry name" value="CFA/CMAS"/>
</dbReference>
<dbReference type="InterPro" id="IPR003333">
    <property type="entry name" value="CMAS"/>
</dbReference>
<dbReference type="InterPro" id="IPR047672">
    <property type="entry name" value="CMAS_actinobact"/>
</dbReference>
<dbReference type="InterPro" id="IPR029063">
    <property type="entry name" value="SAM-dependent_MTases_sf"/>
</dbReference>
<dbReference type="NCBIfam" id="NF040660">
    <property type="entry name" value="mycolic_MTase"/>
    <property type="match status" value="1"/>
</dbReference>
<dbReference type="PANTHER" id="PTHR43667">
    <property type="entry name" value="CYCLOPROPANE-FATTY-ACYL-PHOSPHOLIPID SYNTHASE"/>
    <property type="match status" value="1"/>
</dbReference>
<dbReference type="PANTHER" id="PTHR43667:SF1">
    <property type="entry name" value="CYCLOPROPANE-FATTY-ACYL-PHOSPHOLIPID SYNTHASE"/>
    <property type="match status" value="1"/>
</dbReference>
<dbReference type="Pfam" id="PF02353">
    <property type="entry name" value="CMAS"/>
    <property type="match status" value="1"/>
</dbReference>
<dbReference type="PIRSF" id="PIRSF003085">
    <property type="entry name" value="CMAS"/>
    <property type="match status" value="1"/>
</dbReference>
<dbReference type="SUPFAM" id="SSF53335">
    <property type="entry name" value="S-adenosyl-L-methionine-dependent methyltransferases"/>
    <property type="match status" value="1"/>
</dbReference>
<proteinExistence type="inferred from homology"/>
<comment type="function">
    <text evidence="1">Catalyzes the conversion of a double bond to a cyclopropane ring at the distal position of an alpha mycolic acid via the transfer of a methylene group from S-adenosyl-L-methionine. Cyclopropanated mycolic acids are key factors participating in cell envelope permeability, host immunomodulation and persistence (By similarity).</text>
</comment>
<comment type="catalytic activity">
    <reaction>
        <text>a 1-acyl-2-(9Z)-enoyl-sn-glycero-3-phospholipid + S-adenosyl-L-methionine = a 1-acyl-2-(9-cyclopronane)-acyl-sn-glycero-3-phospholipid + S-adenosyl-L-homocysteine + H(+)</text>
        <dbReference type="Rhea" id="RHEA:11988"/>
        <dbReference type="ChEBI" id="CHEBI:15378"/>
        <dbReference type="ChEBI" id="CHEBI:57856"/>
        <dbReference type="ChEBI" id="CHEBI:59789"/>
        <dbReference type="ChEBI" id="CHEBI:76593"/>
        <dbReference type="ChEBI" id="CHEBI:76594"/>
        <dbReference type="EC" id="2.1.1.79"/>
    </reaction>
</comment>
<comment type="pathway">
    <text>Lipid metabolism; mycolic acid biosynthesis.</text>
</comment>
<comment type="subunit">
    <text evidence="1">Homodimer.</text>
</comment>
<comment type="subcellular location">
    <subcellularLocation>
        <location evidence="1">Cytoplasm</location>
    </subcellularLocation>
</comment>
<comment type="similarity">
    <text evidence="2">Belongs to the CFA/CMAS family.</text>
</comment>